<comment type="function">
    <text evidence="4 5">Transcription factor which plays a key role in the Hippo signaling pathway, a pathway involved in organ size control and tumor suppression by restricting proliferation and promoting apoptosis. The core of this pathway is composed of a kinase cascade wherein MST1/MST2, in complex with its regulatory protein SAV1, phosphorylates and activates LATS1/2 in complex with its regulatory protein MOB1, which in turn phosphorylates and inactivates YAP1 oncoprotein and WWTR1/TAZ. Acts by mediating gene expression of YAP1 and WWTR1/TAZ, thereby regulating cell proliferation, migration and epithelial mesenchymal transition (EMT) induction. Binds to multiple functional elements of the human chorionic somatomammotropin-B gene enhancer.</text>
</comment>
<comment type="subunit">
    <text evidence="4 5">Interacts with YAP1 and WWTR1/TAZ.</text>
</comment>
<comment type="interaction">
    <interactant intactId="EBI-746720">
        <id>Q99594</id>
    </interactant>
    <interactant intactId="EBI-11983165">
        <id>Q99990</id>
        <label>VGLL1</label>
    </interactant>
    <organismsDiffer>false</organismsDiffer>
    <experiments>4</experiments>
</comment>
<comment type="interaction">
    <interactant intactId="EBI-746720">
        <id>Q99594</id>
    </interactant>
    <interactant intactId="EBI-10267981">
        <id>Q8N8G2</id>
        <label>VGLL2</label>
    </interactant>
    <organismsDiffer>false</organismsDiffer>
    <experiments>3</experiments>
</comment>
<comment type="interaction">
    <interactant intactId="EBI-746720">
        <id>Q99594</id>
    </interactant>
    <interactant intactId="EBI-11957216">
        <id>A8MV65-2</id>
        <label>VGLL3</label>
    </interactant>
    <organismsDiffer>false</organismsDiffer>
    <experiments>3</experiments>
</comment>
<comment type="interaction">
    <interactant intactId="EBI-746720">
        <id>Q99594</id>
    </interactant>
    <interactant intactId="EBI-5278589">
        <id>Q14135</id>
        <label>VGLL4</label>
    </interactant>
    <organismsDiffer>false</organismsDiffer>
    <experiments>5</experiments>
</comment>
<comment type="interaction">
    <interactant intactId="EBI-746720">
        <id>Q99594</id>
    </interactant>
    <interactant intactId="EBI-747743">
        <id>Q9GZV5</id>
        <label>WWTR1</label>
    </interactant>
    <organismsDiffer>false</organismsDiffer>
    <experiments>5</experiments>
</comment>
<comment type="subcellular location">
    <subcellularLocation>
        <location>Nucleus</location>
    </subcellularLocation>
</comment>
<comment type="tissue specificity">
    <text>Preferentially expressed in the placenta.</text>
</comment>
<comment type="sequence caution" evidence="6">
    <conflict type="miscellaneous discrepancy">
        <sequence resource="EMBL-CDS" id="AAH27877"/>
    </conflict>
    <text>Unusual initiator. The initiator methionine is coded by a non-canonical ATA isoleucine codon.</text>
</comment>
<comment type="sequence caution" evidence="6">
    <conflict type="miscellaneous discrepancy">
        <sequence resource="EMBL-CDS" id="AAH91488"/>
    </conflict>
    <text>Unusual initiator. The initiator methionine is coded by a non-canonical ATA isoleucine codon.</text>
</comment>
<comment type="sequence caution" evidence="6">
    <conflict type="miscellaneous discrepancy">
        <sequence resource="EMBL-CDS" id="CAA64213"/>
    </conflict>
    <text>Unusual initiator. The initiator methionine is coded by a non-canonical ATA isoleucine codon.</text>
</comment>
<gene>
    <name type="primary">TEAD3</name>
    <name type="synonym">TEAD5</name>
    <name type="synonym">TEF5</name>
</gene>
<dbReference type="EMBL" id="X94439">
    <property type="protein sequence ID" value="CAA64213.2"/>
    <property type="status" value="ALT_SEQ"/>
    <property type="molecule type" value="mRNA"/>
</dbReference>
<dbReference type="EMBL" id="AL022721">
    <property type="status" value="NOT_ANNOTATED_CDS"/>
    <property type="molecule type" value="Genomic_DNA"/>
</dbReference>
<dbReference type="EMBL" id="BC027877">
    <property type="protein sequence ID" value="AAH27877.1"/>
    <property type="status" value="ALT_SEQ"/>
    <property type="molecule type" value="mRNA"/>
</dbReference>
<dbReference type="EMBL" id="BC091488">
    <property type="protein sequence ID" value="AAH91488.2"/>
    <property type="status" value="ALT_SEQ"/>
    <property type="molecule type" value="mRNA"/>
</dbReference>
<dbReference type="CCDS" id="CCDS47414.1"/>
<dbReference type="RefSeq" id="NP_003205.2">
    <property type="nucleotide sequence ID" value="NM_003214.3"/>
</dbReference>
<dbReference type="PDB" id="5EMW">
    <property type="method" value="X-ray"/>
    <property type="resolution" value="2.55 A"/>
    <property type="chains" value="A/B/C/D=219-435"/>
</dbReference>
<dbReference type="PDB" id="7CNL">
    <property type="method" value="X-ray"/>
    <property type="resolution" value="2.60 A"/>
    <property type="chains" value="A/B/C/D=216-435"/>
</dbReference>
<dbReference type="PDB" id="7ZJQ">
    <property type="method" value="X-ray"/>
    <property type="resolution" value="2.10 A"/>
    <property type="chains" value="A/B/C/D=216-435"/>
</dbReference>
<dbReference type="PDB" id="8P0M">
    <property type="method" value="X-ray"/>
    <property type="resolution" value="1.96 A"/>
    <property type="chains" value="A/B=218-435"/>
</dbReference>
<dbReference type="PDBsum" id="5EMW"/>
<dbReference type="PDBsum" id="7CNL"/>
<dbReference type="PDBsum" id="7ZJQ"/>
<dbReference type="PDBsum" id="8P0M"/>
<dbReference type="SMR" id="Q99594"/>
<dbReference type="BioGRID" id="112864">
    <property type="interactions" value="32"/>
</dbReference>
<dbReference type="DIP" id="DIP-50657N"/>
<dbReference type="FunCoup" id="Q99594">
    <property type="interactions" value="839"/>
</dbReference>
<dbReference type="IntAct" id="Q99594">
    <property type="interactions" value="27"/>
</dbReference>
<dbReference type="MINT" id="Q99594"/>
<dbReference type="STRING" id="9606.ENSP00000345772"/>
<dbReference type="BindingDB" id="Q99594"/>
<dbReference type="ChEMBL" id="CHEMBL4523435"/>
<dbReference type="DrugCentral" id="Q99594"/>
<dbReference type="GuidetoPHARMACOLOGY" id="3242"/>
<dbReference type="GlyCosmos" id="Q99594">
    <property type="glycosylation" value="1 site, 1 glycan"/>
</dbReference>
<dbReference type="GlyGen" id="Q99594">
    <property type="glycosylation" value="3 sites, 1 O-linked glycan (3 sites)"/>
</dbReference>
<dbReference type="iPTMnet" id="Q99594"/>
<dbReference type="PhosphoSitePlus" id="Q99594"/>
<dbReference type="SwissPalm" id="Q99594"/>
<dbReference type="BioMuta" id="TEAD3"/>
<dbReference type="DMDM" id="2501157"/>
<dbReference type="jPOST" id="Q99594"/>
<dbReference type="MassIVE" id="Q99594"/>
<dbReference type="PaxDb" id="9606-ENSP00000345772"/>
<dbReference type="PeptideAtlas" id="Q99594"/>
<dbReference type="ProteomicsDB" id="78349"/>
<dbReference type="Pumba" id="Q99594"/>
<dbReference type="Antibodypedia" id="6662">
    <property type="antibodies" value="263 antibodies from 31 providers"/>
</dbReference>
<dbReference type="DNASU" id="7005"/>
<dbReference type="Ensembl" id="ENST00000338863.13">
    <property type="protein sequence ID" value="ENSP00000345772.8"/>
    <property type="gene ID" value="ENSG00000007866.22"/>
</dbReference>
<dbReference type="GeneID" id="7005"/>
<dbReference type="KEGG" id="hsa:7005"/>
<dbReference type="MANE-Select" id="ENST00000338863.13">
    <property type="protein sequence ID" value="ENSP00000345772.8"/>
    <property type="RefSeq nucleotide sequence ID" value="NM_003214.4"/>
    <property type="RefSeq protein sequence ID" value="NP_003205.2"/>
</dbReference>
<dbReference type="UCSC" id="uc063obu.1">
    <property type="organism name" value="human"/>
</dbReference>
<dbReference type="AGR" id="HGNC:11716"/>
<dbReference type="CTD" id="7005"/>
<dbReference type="DisGeNET" id="7005"/>
<dbReference type="GeneCards" id="TEAD3"/>
<dbReference type="HGNC" id="HGNC:11716">
    <property type="gene designation" value="TEAD3"/>
</dbReference>
<dbReference type="HPA" id="ENSG00000007866">
    <property type="expression patterns" value="Low tissue specificity"/>
</dbReference>
<dbReference type="MalaCards" id="TEAD3"/>
<dbReference type="MIM" id="603170">
    <property type="type" value="gene"/>
</dbReference>
<dbReference type="neXtProt" id="NX_Q99594"/>
<dbReference type="OpenTargets" id="ENSG00000007866"/>
<dbReference type="PharmGKB" id="PA36434"/>
<dbReference type="VEuPathDB" id="HostDB:ENSG00000007866"/>
<dbReference type="eggNOG" id="KOG3841">
    <property type="taxonomic scope" value="Eukaryota"/>
</dbReference>
<dbReference type="GeneTree" id="ENSGT00950000182956"/>
<dbReference type="HOGENOM" id="CLU_012515_0_1_1"/>
<dbReference type="InParanoid" id="Q99594"/>
<dbReference type="OrthoDB" id="10006572at2759"/>
<dbReference type="PAN-GO" id="Q99594">
    <property type="GO annotations" value="6 GO annotations based on evolutionary models"/>
</dbReference>
<dbReference type="PhylomeDB" id="Q99594"/>
<dbReference type="TreeFam" id="TF313443"/>
<dbReference type="PathwayCommons" id="Q99594"/>
<dbReference type="Reactome" id="R-HSA-2032785">
    <property type="pathway name" value="YAP1- and WWTR1 (TAZ)-stimulated gene expression"/>
</dbReference>
<dbReference type="Reactome" id="R-HSA-8951671">
    <property type="pathway name" value="RUNX3 regulates YAP1-mediated transcription"/>
</dbReference>
<dbReference type="SignaLink" id="Q99594"/>
<dbReference type="SIGNOR" id="Q99594"/>
<dbReference type="BioGRID-ORCS" id="7005">
    <property type="hits" value="100 hits in 1191 CRISPR screens"/>
</dbReference>
<dbReference type="ChiTaRS" id="TEAD3">
    <property type="organism name" value="human"/>
</dbReference>
<dbReference type="GeneWiki" id="TEAD3"/>
<dbReference type="GenomeRNAi" id="7005"/>
<dbReference type="Pharos" id="Q99594">
    <property type="development level" value="Tbio"/>
</dbReference>
<dbReference type="PRO" id="PR:Q99594"/>
<dbReference type="Proteomes" id="UP000005640">
    <property type="component" value="Chromosome 6"/>
</dbReference>
<dbReference type="RNAct" id="Q99594">
    <property type="molecule type" value="protein"/>
</dbReference>
<dbReference type="Bgee" id="ENSG00000007866">
    <property type="expression patterns" value="Expressed in muscle layer of sigmoid colon and 171 other cell types or tissues"/>
</dbReference>
<dbReference type="ExpressionAtlas" id="Q99594">
    <property type="expression patterns" value="baseline and differential"/>
</dbReference>
<dbReference type="GO" id="GO:0000785">
    <property type="term" value="C:chromatin"/>
    <property type="evidence" value="ECO:0000247"/>
    <property type="project" value="NTNU_SB"/>
</dbReference>
<dbReference type="GO" id="GO:0005654">
    <property type="term" value="C:nucleoplasm"/>
    <property type="evidence" value="ECO:0000304"/>
    <property type="project" value="Reactome"/>
</dbReference>
<dbReference type="GO" id="GO:0005667">
    <property type="term" value="C:transcription regulator complex"/>
    <property type="evidence" value="ECO:0000318"/>
    <property type="project" value="GO_Central"/>
</dbReference>
<dbReference type="GO" id="GO:0003700">
    <property type="term" value="F:DNA-binding transcription factor activity"/>
    <property type="evidence" value="ECO:0000314"/>
    <property type="project" value="UniProtKB"/>
</dbReference>
<dbReference type="GO" id="GO:0000981">
    <property type="term" value="F:DNA-binding transcription factor activity, RNA polymerase II-specific"/>
    <property type="evidence" value="ECO:0000247"/>
    <property type="project" value="NTNU_SB"/>
</dbReference>
<dbReference type="GO" id="GO:0000978">
    <property type="term" value="F:RNA polymerase II cis-regulatory region sequence-specific DNA binding"/>
    <property type="evidence" value="ECO:0000318"/>
    <property type="project" value="GO_Central"/>
</dbReference>
<dbReference type="GO" id="GO:0061629">
    <property type="term" value="F:RNA polymerase II-specific DNA-binding transcription factor binding"/>
    <property type="evidence" value="ECO:0000353"/>
    <property type="project" value="WormBase"/>
</dbReference>
<dbReference type="GO" id="GO:0055059">
    <property type="term" value="P:asymmetric neuroblast division"/>
    <property type="evidence" value="ECO:0000316"/>
    <property type="project" value="UniProtKB"/>
</dbReference>
<dbReference type="GO" id="GO:0048568">
    <property type="term" value="P:embryonic organ development"/>
    <property type="evidence" value="ECO:0000318"/>
    <property type="project" value="GO_Central"/>
</dbReference>
<dbReference type="GO" id="GO:0007565">
    <property type="term" value="P:female pregnancy"/>
    <property type="evidence" value="ECO:0000304"/>
    <property type="project" value="ProtInc"/>
</dbReference>
<dbReference type="GO" id="GO:0035329">
    <property type="term" value="P:hippo signaling"/>
    <property type="evidence" value="ECO:0000314"/>
    <property type="project" value="UniProtKB"/>
</dbReference>
<dbReference type="GO" id="GO:0045944">
    <property type="term" value="P:positive regulation of transcription by RNA polymerase II"/>
    <property type="evidence" value="ECO:0007669"/>
    <property type="project" value="InterPro"/>
</dbReference>
<dbReference type="GO" id="GO:0006357">
    <property type="term" value="P:regulation of transcription by RNA polymerase II"/>
    <property type="evidence" value="ECO:0000318"/>
    <property type="project" value="GO_Central"/>
</dbReference>
<dbReference type="FunFam" id="2.70.50.80:FF:000001">
    <property type="entry name" value="Transcriptional enhancer factor TEF-1, putative"/>
    <property type="match status" value="1"/>
</dbReference>
<dbReference type="Gene3D" id="2.70.50.80">
    <property type="match status" value="1"/>
</dbReference>
<dbReference type="Gene3D" id="6.10.20.40">
    <property type="entry name" value="TEA/ATTS domain"/>
    <property type="match status" value="1"/>
</dbReference>
<dbReference type="InterPro" id="IPR000818">
    <property type="entry name" value="TEA/ATTS_dom"/>
</dbReference>
<dbReference type="InterPro" id="IPR038096">
    <property type="entry name" value="TEA/ATTS_sf"/>
</dbReference>
<dbReference type="InterPro" id="IPR050937">
    <property type="entry name" value="TEC1_TEAD_TF"/>
</dbReference>
<dbReference type="InterPro" id="IPR027253">
    <property type="entry name" value="TEF-5"/>
</dbReference>
<dbReference type="InterPro" id="IPR016361">
    <property type="entry name" value="TEF_metazoa"/>
</dbReference>
<dbReference type="InterPro" id="IPR041086">
    <property type="entry name" value="YBD"/>
</dbReference>
<dbReference type="PANTHER" id="PTHR11834">
    <property type="entry name" value="TRANSCRIPTIONAL ENHANCER FACTOR TEF RELATED"/>
    <property type="match status" value="1"/>
</dbReference>
<dbReference type="PANTHER" id="PTHR11834:SF7">
    <property type="entry name" value="TRANSCRIPTIONAL ENHANCER FACTOR TEF-5"/>
    <property type="match status" value="1"/>
</dbReference>
<dbReference type="Pfam" id="PF01285">
    <property type="entry name" value="TEA"/>
    <property type="match status" value="1"/>
</dbReference>
<dbReference type="Pfam" id="PF17725">
    <property type="entry name" value="YBD"/>
    <property type="match status" value="1"/>
</dbReference>
<dbReference type="PIRSF" id="PIRSF002603">
    <property type="entry name" value="TEF"/>
    <property type="match status" value="1"/>
</dbReference>
<dbReference type="PIRSF" id="PIRSF500720">
    <property type="entry name" value="TEF-5"/>
    <property type="match status" value="1"/>
</dbReference>
<dbReference type="PRINTS" id="PR00065">
    <property type="entry name" value="TEADOMAIN"/>
</dbReference>
<dbReference type="SMART" id="SM00426">
    <property type="entry name" value="TEA"/>
    <property type="match status" value="1"/>
</dbReference>
<dbReference type="PROSITE" id="PS00554">
    <property type="entry name" value="TEA_1"/>
    <property type="match status" value="1"/>
</dbReference>
<dbReference type="PROSITE" id="PS51088">
    <property type="entry name" value="TEA_2"/>
    <property type="match status" value="1"/>
</dbReference>
<feature type="initiator methionine" description="Removed" evidence="7">
    <location>
        <position position="1"/>
    </location>
</feature>
<feature type="chain" id="PRO_0000205934" description="Transcriptional enhancer factor TEF-5">
    <location>
        <begin position="2"/>
        <end position="435"/>
    </location>
</feature>
<feature type="DNA-binding region" description="TEA" evidence="2">
    <location>
        <begin position="28"/>
        <end position="104"/>
    </location>
</feature>
<feature type="region of interest" description="Disordered" evidence="3">
    <location>
        <begin position="1"/>
        <end position="34"/>
    </location>
</feature>
<feature type="region of interest" description="Transcriptional activation" evidence="1">
    <location>
        <begin position="173"/>
        <end position="435"/>
    </location>
</feature>
<feature type="compositionally biased region" description="Polar residues" evidence="3">
    <location>
        <begin position="1"/>
        <end position="12"/>
    </location>
</feature>
<feature type="compositionally biased region" description="Basic and acidic residues" evidence="3">
    <location>
        <begin position="14"/>
        <end position="28"/>
    </location>
</feature>
<feature type="modified residue" description="N-acetylalanine" evidence="7">
    <location>
        <position position="2"/>
    </location>
</feature>
<feature type="modified residue" description="Phosphoserine" evidence="8">
    <location>
        <position position="148"/>
    </location>
</feature>
<feature type="sequence variant" id="VAR_052278" description="In dbSNP:rs35080860.">
    <original>T</original>
    <variation>M</variation>
    <location>
        <position position="254"/>
    </location>
</feature>
<feature type="strand" evidence="10">
    <location>
        <begin position="226"/>
        <end position="239"/>
    </location>
</feature>
<feature type="strand" evidence="10">
    <location>
        <begin position="242"/>
        <end position="251"/>
    </location>
</feature>
<feature type="strand" evidence="9">
    <location>
        <begin position="256"/>
        <end position="258"/>
    </location>
</feature>
<feature type="strand" evidence="10">
    <location>
        <begin position="264"/>
        <end position="267"/>
    </location>
</feature>
<feature type="helix" evidence="10">
    <location>
        <begin position="268"/>
        <end position="270"/>
    </location>
</feature>
<feature type="helix" evidence="10">
    <location>
        <begin position="272"/>
        <end position="274"/>
    </location>
</feature>
<feature type="helix" evidence="10">
    <location>
        <begin position="282"/>
        <end position="288"/>
    </location>
</feature>
<feature type="helix" evidence="10">
    <location>
        <begin position="291"/>
        <end position="293"/>
    </location>
</feature>
<feature type="strand" evidence="10">
    <location>
        <begin position="294"/>
        <end position="301"/>
    </location>
</feature>
<feature type="strand" evidence="10">
    <location>
        <begin position="314"/>
        <end position="325"/>
    </location>
</feature>
<feature type="strand" evidence="10">
    <location>
        <begin position="329"/>
        <end position="337"/>
    </location>
</feature>
<feature type="strand" evidence="10">
    <location>
        <begin position="340"/>
        <end position="349"/>
    </location>
</feature>
<feature type="strand" evidence="10">
    <location>
        <begin position="352"/>
        <end position="354"/>
    </location>
</feature>
<feature type="strand" evidence="10">
    <location>
        <begin position="357"/>
        <end position="366"/>
    </location>
</feature>
<feature type="helix" evidence="10">
    <location>
        <begin position="369"/>
        <end position="379"/>
    </location>
</feature>
<feature type="helix" evidence="10">
    <location>
        <begin position="384"/>
        <end position="391"/>
    </location>
</feature>
<feature type="strand" evidence="10">
    <location>
        <begin position="394"/>
        <end position="402"/>
    </location>
</feature>
<feature type="turn" evidence="10">
    <location>
        <begin position="403"/>
        <end position="405"/>
    </location>
</feature>
<feature type="strand" evidence="10">
    <location>
        <begin position="408"/>
        <end position="418"/>
    </location>
</feature>
<feature type="strand" evidence="10">
    <location>
        <begin position="426"/>
        <end position="433"/>
    </location>
</feature>
<sequence>MASNSWNASSSPGEAREDGPEGLDKGLDNDAEGVWSPDIEQSFQEALAIYPPCGRRKIILSDEGKMYGRNELIARYIKLRTGKTRTRKQVSSHIQVLARKKVREYQVGIKAMNLDQVSKDKALQSMASMSSAQIVSASVLQNKFSPPSPLPQAVFSTSSRFWSSPPLLGQQPGPSQDIKPFAQPAYPIQPPLPPTLSSYEPLAPLPSAAASVPVWQDRTIASSRLRLLEYSAFMEVQRDPDTYSKHLFVHIGQTNPAFSDPPLEAVDVRQIYDKFPEKKGGLKELYEKGPPNAFFLVKFWADLNSTIQEGPGAFYGVSSQYSSADSMTISVSTKVCSFGKQVVEKVETEYARLENGRFVYRIHRSPMCEYMINFIHKLKHLPEKYMMNSVLENFTILQVVTSRDSQETLLVIAFVFEVSTSEHGAQHHVYKLVKD</sequence>
<organism>
    <name type="scientific">Homo sapiens</name>
    <name type="common">Human</name>
    <dbReference type="NCBI Taxonomy" id="9606"/>
    <lineage>
        <taxon>Eukaryota</taxon>
        <taxon>Metazoa</taxon>
        <taxon>Chordata</taxon>
        <taxon>Craniata</taxon>
        <taxon>Vertebrata</taxon>
        <taxon>Euteleostomi</taxon>
        <taxon>Mammalia</taxon>
        <taxon>Eutheria</taxon>
        <taxon>Euarchontoglires</taxon>
        <taxon>Primates</taxon>
        <taxon>Haplorrhini</taxon>
        <taxon>Catarrhini</taxon>
        <taxon>Hominidae</taxon>
        <taxon>Homo</taxon>
    </lineage>
</organism>
<name>TEAD3_HUMAN</name>
<evidence type="ECO:0000255" key="1"/>
<evidence type="ECO:0000255" key="2">
    <source>
        <dbReference type="PROSITE-ProRule" id="PRU00505"/>
    </source>
</evidence>
<evidence type="ECO:0000256" key="3">
    <source>
        <dbReference type="SAM" id="MobiDB-lite"/>
    </source>
</evidence>
<evidence type="ECO:0000269" key="4">
    <source>
    </source>
</evidence>
<evidence type="ECO:0000269" key="5">
    <source>
    </source>
</evidence>
<evidence type="ECO:0000305" key="6"/>
<evidence type="ECO:0007744" key="7">
    <source>
    </source>
</evidence>
<evidence type="ECO:0007744" key="8">
    <source>
    </source>
</evidence>
<evidence type="ECO:0007829" key="9">
    <source>
        <dbReference type="PDB" id="7CNL"/>
    </source>
</evidence>
<evidence type="ECO:0007829" key="10">
    <source>
        <dbReference type="PDB" id="8P0M"/>
    </source>
</evidence>
<reference key="1">
    <citation type="journal article" date="1997" name="J. Biol. Chem.">
        <title>Human TEF-5 is preferentially expressed in placenta and binds to multiple functional elements of the human chorionic somatomammotropin-B gene enhancer.</title>
        <authorList>
            <person name="Jacquemin P."/>
            <person name="Martial J.A."/>
            <person name="Davidson I."/>
        </authorList>
    </citation>
    <scope>NUCLEOTIDE SEQUENCE [MRNA]</scope>
</reference>
<reference key="2">
    <citation type="journal article" date="2003" name="Nature">
        <title>The DNA sequence and analysis of human chromosome 6.</title>
        <authorList>
            <person name="Mungall A.J."/>
            <person name="Palmer S.A."/>
            <person name="Sims S.K."/>
            <person name="Edwards C.A."/>
            <person name="Ashurst J.L."/>
            <person name="Wilming L."/>
            <person name="Jones M.C."/>
            <person name="Horton R."/>
            <person name="Hunt S.E."/>
            <person name="Scott C.E."/>
            <person name="Gilbert J.G.R."/>
            <person name="Clamp M.E."/>
            <person name="Bethel G."/>
            <person name="Milne S."/>
            <person name="Ainscough R."/>
            <person name="Almeida J.P."/>
            <person name="Ambrose K.D."/>
            <person name="Andrews T.D."/>
            <person name="Ashwell R.I.S."/>
            <person name="Babbage A.K."/>
            <person name="Bagguley C.L."/>
            <person name="Bailey J."/>
            <person name="Banerjee R."/>
            <person name="Barker D.J."/>
            <person name="Barlow K.F."/>
            <person name="Bates K."/>
            <person name="Beare D.M."/>
            <person name="Beasley H."/>
            <person name="Beasley O."/>
            <person name="Bird C.P."/>
            <person name="Blakey S.E."/>
            <person name="Bray-Allen S."/>
            <person name="Brook J."/>
            <person name="Brown A.J."/>
            <person name="Brown J.Y."/>
            <person name="Burford D.C."/>
            <person name="Burrill W."/>
            <person name="Burton J."/>
            <person name="Carder C."/>
            <person name="Carter N.P."/>
            <person name="Chapman J.C."/>
            <person name="Clark S.Y."/>
            <person name="Clark G."/>
            <person name="Clee C.M."/>
            <person name="Clegg S."/>
            <person name="Cobley V."/>
            <person name="Collier R.E."/>
            <person name="Collins J.E."/>
            <person name="Colman L.K."/>
            <person name="Corby N.R."/>
            <person name="Coville G.J."/>
            <person name="Culley K.M."/>
            <person name="Dhami P."/>
            <person name="Davies J."/>
            <person name="Dunn M."/>
            <person name="Earthrowl M.E."/>
            <person name="Ellington A.E."/>
            <person name="Evans K.A."/>
            <person name="Faulkner L."/>
            <person name="Francis M.D."/>
            <person name="Frankish A."/>
            <person name="Frankland J."/>
            <person name="French L."/>
            <person name="Garner P."/>
            <person name="Garnett J."/>
            <person name="Ghori M.J."/>
            <person name="Gilby L.M."/>
            <person name="Gillson C.J."/>
            <person name="Glithero R.J."/>
            <person name="Grafham D.V."/>
            <person name="Grant M."/>
            <person name="Gribble S."/>
            <person name="Griffiths C."/>
            <person name="Griffiths M.N.D."/>
            <person name="Hall R."/>
            <person name="Halls K.S."/>
            <person name="Hammond S."/>
            <person name="Harley J.L."/>
            <person name="Hart E.A."/>
            <person name="Heath P.D."/>
            <person name="Heathcott R."/>
            <person name="Holmes S.J."/>
            <person name="Howden P.J."/>
            <person name="Howe K.L."/>
            <person name="Howell G.R."/>
            <person name="Huckle E."/>
            <person name="Humphray S.J."/>
            <person name="Humphries M.D."/>
            <person name="Hunt A.R."/>
            <person name="Johnson C.M."/>
            <person name="Joy A.A."/>
            <person name="Kay M."/>
            <person name="Keenan S.J."/>
            <person name="Kimberley A.M."/>
            <person name="King A."/>
            <person name="Laird G.K."/>
            <person name="Langford C."/>
            <person name="Lawlor S."/>
            <person name="Leongamornlert D.A."/>
            <person name="Leversha M."/>
            <person name="Lloyd C.R."/>
            <person name="Lloyd D.M."/>
            <person name="Loveland J.E."/>
            <person name="Lovell J."/>
            <person name="Martin S."/>
            <person name="Mashreghi-Mohammadi M."/>
            <person name="Maslen G.L."/>
            <person name="Matthews L."/>
            <person name="McCann O.T."/>
            <person name="McLaren S.J."/>
            <person name="McLay K."/>
            <person name="McMurray A."/>
            <person name="Moore M.J.F."/>
            <person name="Mullikin J.C."/>
            <person name="Niblett D."/>
            <person name="Nickerson T."/>
            <person name="Novik K.L."/>
            <person name="Oliver K."/>
            <person name="Overton-Larty E.K."/>
            <person name="Parker A."/>
            <person name="Patel R."/>
            <person name="Pearce A.V."/>
            <person name="Peck A.I."/>
            <person name="Phillimore B.J.C.T."/>
            <person name="Phillips S."/>
            <person name="Plumb R.W."/>
            <person name="Porter K.M."/>
            <person name="Ramsey Y."/>
            <person name="Ranby S.A."/>
            <person name="Rice C.M."/>
            <person name="Ross M.T."/>
            <person name="Searle S.M."/>
            <person name="Sehra H.K."/>
            <person name="Sheridan E."/>
            <person name="Skuce C.D."/>
            <person name="Smith S."/>
            <person name="Smith M."/>
            <person name="Spraggon L."/>
            <person name="Squares S.L."/>
            <person name="Steward C.A."/>
            <person name="Sycamore N."/>
            <person name="Tamlyn-Hall G."/>
            <person name="Tester J."/>
            <person name="Theaker A.J."/>
            <person name="Thomas D.W."/>
            <person name="Thorpe A."/>
            <person name="Tracey A."/>
            <person name="Tromans A."/>
            <person name="Tubby B."/>
            <person name="Wall M."/>
            <person name="Wallis J.M."/>
            <person name="West A.P."/>
            <person name="White S.S."/>
            <person name="Whitehead S.L."/>
            <person name="Whittaker H."/>
            <person name="Wild A."/>
            <person name="Willey D.J."/>
            <person name="Wilmer T.E."/>
            <person name="Wood J.M."/>
            <person name="Wray P.W."/>
            <person name="Wyatt J.C."/>
            <person name="Young L."/>
            <person name="Younger R.M."/>
            <person name="Bentley D.R."/>
            <person name="Coulson A."/>
            <person name="Durbin R.M."/>
            <person name="Hubbard T."/>
            <person name="Sulston J.E."/>
            <person name="Dunham I."/>
            <person name="Rogers J."/>
            <person name="Beck S."/>
        </authorList>
    </citation>
    <scope>NUCLEOTIDE SEQUENCE [LARGE SCALE GENOMIC DNA]</scope>
</reference>
<reference key="3">
    <citation type="journal article" date="2004" name="Genome Res.">
        <title>The status, quality, and expansion of the NIH full-length cDNA project: the Mammalian Gene Collection (MGC).</title>
        <authorList>
            <consortium name="The MGC Project Team"/>
        </authorList>
    </citation>
    <scope>NUCLEOTIDE SEQUENCE [LARGE SCALE MRNA]</scope>
    <source>
        <tissue>Lung</tissue>
        <tissue>PNS</tissue>
    </source>
</reference>
<reference key="4">
    <citation type="journal article" date="2008" name="Genes Dev.">
        <title>TEAD mediates YAP-dependent gene induction and growth control.</title>
        <authorList>
            <person name="Zhao B."/>
            <person name="Ye X."/>
            <person name="Yu J."/>
            <person name="Li L."/>
            <person name="Li W."/>
            <person name="Li S."/>
            <person name="Yu J."/>
            <person name="Lin J.D."/>
            <person name="Wang C.Y."/>
            <person name="Chinnaiyan A.M."/>
            <person name="Lai Z.C."/>
            <person name="Guan K.L."/>
        </authorList>
    </citation>
    <scope>FUNCTION</scope>
    <scope>INTERACTION WITH YAP1</scope>
</reference>
<reference key="5">
    <citation type="journal article" date="2009" name="J. Biol. Chem.">
        <title>TEAD transcription factors mediate the function of TAZ in cell growth and epithelial-mesenchymal transition.</title>
        <authorList>
            <person name="Zhang H."/>
            <person name="Liu C.Y."/>
            <person name="Zha Z.Y."/>
            <person name="Zhao B."/>
            <person name="Yao J."/>
            <person name="Zhao S."/>
            <person name="Xiong Y."/>
            <person name="Lei Q.Y."/>
            <person name="Guan K.L."/>
        </authorList>
    </citation>
    <scope>IDENTIFICATION BY MASS SPECTROMETRY</scope>
    <scope>FUNCTION</scope>
    <scope>INTERACTION WITH WWTR1</scope>
</reference>
<reference key="6">
    <citation type="journal article" date="2010" name="Sci. Signal.">
        <title>Quantitative phosphoproteomics reveals widespread full phosphorylation site occupancy during mitosis.</title>
        <authorList>
            <person name="Olsen J.V."/>
            <person name="Vermeulen M."/>
            <person name="Santamaria A."/>
            <person name="Kumar C."/>
            <person name="Miller M.L."/>
            <person name="Jensen L.J."/>
            <person name="Gnad F."/>
            <person name="Cox J."/>
            <person name="Jensen T.S."/>
            <person name="Nigg E.A."/>
            <person name="Brunak S."/>
            <person name="Mann M."/>
        </authorList>
    </citation>
    <scope>IDENTIFICATION BY MASS SPECTROMETRY [LARGE SCALE ANALYSIS]</scope>
    <source>
        <tissue>Cervix carcinoma</tissue>
    </source>
</reference>
<reference key="7">
    <citation type="journal article" date="2011" name="Sci. Signal.">
        <title>System-wide temporal characterization of the proteome and phosphoproteome of human embryonic stem cell differentiation.</title>
        <authorList>
            <person name="Rigbolt K.T."/>
            <person name="Prokhorova T.A."/>
            <person name="Akimov V."/>
            <person name="Henningsen J."/>
            <person name="Johansen P.T."/>
            <person name="Kratchmarova I."/>
            <person name="Kassem M."/>
            <person name="Mann M."/>
            <person name="Olsen J.V."/>
            <person name="Blagoev B."/>
        </authorList>
    </citation>
    <scope>ACETYLATION [LARGE SCALE ANALYSIS] AT ALA-2</scope>
    <scope>CLEAVAGE OF INITIATOR METHIONINE [LARGE SCALE ANALYSIS]</scope>
    <scope>IDENTIFICATION BY MASS SPECTROMETRY [LARGE SCALE ANALYSIS]</scope>
</reference>
<reference key="8">
    <citation type="journal article" date="2013" name="J. Proteome Res.">
        <title>Toward a comprehensive characterization of a human cancer cell phosphoproteome.</title>
        <authorList>
            <person name="Zhou H."/>
            <person name="Di Palma S."/>
            <person name="Preisinger C."/>
            <person name="Peng M."/>
            <person name="Polat A.N."/>
            <person name="Heck A.J."/>
            <person name="Mohammed S."/>
        </authorList>
    </citation>
    <scope>PHOSPHORYLATION [LARGE SCALE ANALYSIS] AT SER-148</scope>
    <scope>IDENTIFICATION BY MASS SPECTROMETRY [LARGE SCALE ANALYSIS]</scope>
    <source>
        <tissue>Cervix carcinoma</tissue>
        <tissue>Erythroleukemia</tissue>
    </source>
</reference>
<proteinExistence type="evidence at protein level"/>
<protein>
    <recommendedName>
        <fullName>Transcriptional enhancer factor TEF-5</fullName>
    </recommendedName>
    <alternativeName>
        <fullName>DTEF-1</fullName>
    </alternativeName>
    <alternativeName>
        <fullName>TEA domain family member 3</fullName>
        <shortName>TEAD-3</shortName>
    </alternativeName>
</protein>
<keyword id="KW-0002">3D-structure</keyword>
<keyword id="KW-0007">Acetylation</keyword>
<keyword id="KW-0010">Activator</keyword>
<keyword id="KW-0238">DNA-binding</keyword>
<keyword id="KW-0539">Nucleus</keyword>
<keyword id="KW-0597">Phosphoprotein</keyword>
<keyword id="KW-1267">Proteomics identification</keyword>
<keyword id="KW-1185">Reference proteome</keyword>
<keyword id="KW-0804">Transcription</keyword>
<keyword id="KW-0805">Transcription regulation</keyword>
<accession>Q99594</accession>
<accession>O95910</accession>
<accession>Q5BJG7</accession>
<accession>Q8N6Y4</accession>